<evidence type="ECO:0000255" key="1">
    <source>
        <dbReference type="HAMAP-Rule" id="MF_00440"/>
    </source>
</evidence>
<keyword id="KW-0067">ATP-binding</keyword>
<keyword id="KW-0238">DNA-binding</keyword>
<keyword id="KW-0479">Metal-binding</keyword>
<keyword id="KW-0547">Nucleotide-binding</keyword>
<keyword id="KW-1185">Reference proteome</keyword>
<keyword id="KW-0678">Repressor</keyword>
<keyword id="KW-0804">Transcription</keyword>
<keyword id="KW-0805">Transcription regulation</keyword>
<keyword id="KW-0862">Zinc</keyword>
<keyword id="KW-0863">Zinc-finger</keyword>
<sequence length="156" mass="18102">MHCPFCSETDTKVIDSRLVADGAQVRRRRECLTCHDRFTTFETAELVMPRVIKQDGTREPFDEEKLRAGLQRALEKRPVSVEAIESSVQNVKHYLQALGEREVKSLMIGEKVMEELRSLDQVAYVRFASVYRSFQDLSEFQQEIDRLQKPKPSPIK</sequence>
<reference key="1">
    <citation type="journal article" date="2008" name="PLoS Genet.">
        <title>Complete genome sequence of the complex carbohydrate-degrading marine bacterium, Saccharophagus degradans strain 2-40 T.</title>
        <authorList>
            <person name="Weiner R.M."/>
            <person name="Taylor L.E. II"/>
            <person name="Henrissat B."/>
            <person name="Hauser L."/>
            <person name="Land M."/>
            <person name="Coutinho P.M."/>
            <person name="Rancurel C."/>
            <person name="Saunders E.H."/>
            <person name="Longmire A.G."/>
            <person name="Zhang H."/>
            <person name="Bayer E.A."/>
            <person name="Gilbert H.J."/>
            <person name="Larimer F."/>
            <person name="Zhulin I.B."/>
            <person name="Ekborg N.A."/>
            <person name="Lamed R."/>
            <person name="Richardson P.M."/>
            <person name="Borovok I."/>
            <person name="Hutcheson S."/>
        </authorList>
    </citation>
    <scope>NUCLEOTIDE SEQUENCE [LARGE SCALE GENOMIC DNA]</scope>
    <source>
        <strain>2-40 / ATCC 43961 / DSM 17024</strain>
    </source>
</reference>
<organism>
    <name type="scientific">Saccharophagus degradans (strain 2-40 / ATCC 43961 / DSM 17024)</name>
    <dbReference type="NCBI Taxonomy" id="203122"/>
    <lineage>
        <taxon>Bacteria</taxon>
        <taxon>Pseudomonadati</taxon>
        <taxon>Pseudomonadota</taxon>
        <taxon>Gammaproteobacteria</taxon>
        <taxon>Cellvibrionales</taxon>
        <taxon>Cellvibrionaceae</taxon>
        <taxon>Saccharophagus</taxon>
    </lineage>
</organism>
<proteinExistence type="inferred from homology"/>
<dbReference type="EMBL" id="CP000282">
    <property type="protein sequence ID" value="ABD82714.2"/>
    <property type="molecule type" value="Genomic_DNA"/>
</dbReference>
<dbReference type="RefSeq" id="WP_011469930.1">
    <property type="nucleotide sequence ID" value="NC_007912.1"/>
</dbReference>
<dbReference type="SMR" id="Q21F15"/>
<dbReference type="STRING" id="203122.Sde_3459"/>
<dbReference type="GeneID" id="98615074"/>
<dbReference type="KEGG" id="sde:Sde_3459"/>
<dbReference type="eggNOG" id="COG1327">
    <property type="taxonomic scope" value="Bacteria"/>
</dbReference>
<dbReference type="HOGENOM" id="CLU_108412_0_0_6"/>
<dbReference type="OrthoDB" id="9807461at2"/>
<dbReference type="Proteomes" id="UP000001947">
    <property type="component" value="Chromosome"/>
</dbReference>
<dbReference type="GO" id="GO:0005524">
    <property type="term" value="F:ATP binding"/>
    <property type="evidence" value="ECO:0007669"/>
    <property type="project" value="UniProtKB-KW"/>
</dbReference>
<dbReference type="GO" id="GO:0003677">
    <property type="term" value="F:DNA binding"/>
    <property type="evidence" value="ECO:0007669"/>
    <property type="project" value="UniProtKB-KW"/>
</dbReference>
<dbReference type="GO" id="GO:0008270">
    <property type="term" value="F:zinc ion binding"/>
    <property type="evidence" value="ECO:0007669"/>
    <property type="project" value="UniProtKB-UniRule"/>
</dbReference>
<dbReference type="GO" id="GO:0045892">
    <property type="term" value="P:negative regulation of DNA-templated transcription"/>
    <property type="evidence" value="ECO:0007669"/>
    <property type="project" value="UniProtKB-UniRule"/>
</dbReference>
<dbReference type="HAMAP" id="MF_00440">
    <property type="entry name" value="NrdR"/>
    <property type="match status" value="1"/>
</dbReference>
<dbReference type="InterPro" id="IPR005144">
    <property type="entry name" value="ATP-cone_dom"/>
</dbReference>
<dbReference type="InterPro" id="IPR055173">
    <property type="entry name" value="NrdR-like_N"/>
</dbReference>
<dbReference type="InterPro" id="IPR003796">
    <property type="entry name" value="RNR_NrdR-like"/>
</dbReference>
<dbReference type="NCBIfam" id="TIGR00244">
    <property type="entry name" value="transcriptional regulator NrdR"/>
    <property type="match status" value="1"/>
</dbReference>
<dbReference type="PANTHER" id="PTHR30455">
    <property type="entry name" value="TRANSCRIPTIONAL REPRESSOR NRDR"/>
    <property type="match status" value="1"/>
</dbReference>
<dbReference type="PANTHER" id="PTHR30455:SF2">
    <property type="entry name" value="TRANSCRIPTIONAL REPRESSOR NRDR"/>
    <property type="match status" value="1"/>
</dbReference>
<dbReference type="Pfam" id="PF03477">
    <property type="entry name" value="ATP-cone"/>
    <property type="match status" value="1"/>
</dbReference>
<dbReference type="Pfam" id="PF22811">
    <property type="entry name" value="Zn_ribbon_NrdR"/>
    <property type="match status" value="1"/>
</dbReference>
<dbReference type="PROSITE" id="PS51161">
    <property type="entry name" value="ATP_CONE"/>
    <property type="match status" value="1"/>
</dbReference>
<gene>
    <name evidence="1" type="primary">nrdR</name>
    <name type="ordered locus">Sde_3459</name>
</gene>
<comment type="function">
    <text evidence="1">Negatively regulates transcription of bacterial ribonucleotide reductase nrd genes and operons by binding to NrdR-boxes.</text>
</comment>
<comment type="cofactor">
    <cofactor evidence="1">
        <name>Zn(2+)</name>
        <dbReference type="ChEBI" id="CHEBI:29105"/>
    </cofactor>
    <text evidence="1">Binds 1 zinc ion.</text>
</comment>
<comment type="similarity">
    <text evidence="1">Belongs to the NrdR family.</text>
</comment>
<feature type="chain" id="PRO_0000264207" description="Transcriptional repressor NrdR">
    <location>
        <begin position="1"/>
        <end position="156"/>
    </location>
</feature>
<feature type="domain" description="ATP-cone" evidence="1">
    <location>
        <begin position="49"/>
        <end position="139"/>
    </location>
</feature>
<feature type="zinc finger region" evidence="1">
    <location>
        <begin position="3"/>
        <end position="34"/>
    </location>
</feature>
<name>NRDR_SACD2</name>
<accession>Q21F15</accession>
<protein>
    <recommendedName>
        <fullName evidence="1">Transcriptional repressor NrdR</fullName>
    </recommendedName>
</protein>